<accession>P21969</accession>
<accession>Q9J5F1</accession>
<organism>
    <name type="scientific">Fowlpox virus (strain NVSL)</name>
    <name type="common">FPV</name>
    <dbReference type="NCBI Taxonomy" id="928301"/>
    <lineage>
        <taxon>Viruses</taxon>
        <taxon>Varidnaviria</taxon>
        <taxon>Bamfordvirae</taxon>
        <taxon>Nucleocytoviricota</taxon>
        <taxon>Pokkesviricetes</taxon>
        <taxon>Chitovirales</taxon>
        <taxon>Poxviridae</taxon>
        <taxon>Chordopoxvirinae</taxon>
        <taxon>Avipoxvirus</taxon>
        <taxon>Fowlpox virus</taxon>
    </lineage>
</organism>
<sequence>MALSVIRNNHIIFVLKQIGVRTKHRENNNSKYVESFTCDELERYIYSNPDCTLFETLKDEEYYSNVRVFFDVDMDGRLDDKYQATHNFVNIITKFVADYAYNDCKMISNHRDKDKMITDMKSNFSITESTDKEKTSFHLIFFNCYTTLDTLINMRKKLIVLTKESNNRLVKAIDTSVYRHKPSLRIVGTKKDSINIHVHKKTKQNIHFKNYLFTYVDYNEEDCYYFVSEQQHQSPDLLNWKEEYIPFHDAIKKISKAIGNSIINLKDITAENFTVTPLDIYYATPCNLCKKVSHKHPHHLLISNDCIRIYKSGNPNSCKIKTISLEGNKLFSISQQIIDLNVINVSDRGEYLVWLKNVWRMCEDDNNITKLILYMRDHLSSDCTDLLLCPRNRKVIEHNLKDMLIDTIETDTYPEKLQFLNGVYDIKDSIFYQGNDAKKFVCTVSTGYKYEEGINVDDITTELMSILDDIQPKTKENFENRELYEQILSSCLMGTTKQCIFFFYGETATGKSTTKKLLKSVMHNMFLETGQVILTEQMDKGPNPFIANMHLKRVVFCSELPDFSCNTSKKIRSDNIKKLTEPCVVGRSCYSNKINNRNHATIIIDTNYKPVFDKVDNAIMRRIALVNFKTHFTNTKKKVHNSKYDFIKPLNESLDSKIQSNYFRYAFLKILLGWFSKYHVPNLRILPTPDKIPDFKFRLKVESLIIPSNSTHVKYVDKLMKLGYITDDDGIPVLQLNIFQQKLSLHFNVKLYGQDIDSFIMKNKKYMNLADEYMSFIFIEDLNTINEPRNT</sequence>
<keyword id="KW-0067">ATP-binding</keyword>
<keyword id="KW-0235">DNA replication</keyword>
<keyword id="KW-0238">DNA-binding</keyword>
<keyword id="KW-0347">Helicase</keyword>
<keyword id="KW-0378">Hydrolase</keyword>
<keyword id="KW-0547">Nucleotide-binding</keyword>
<keyword id="KW-1185">Reference proteome</keyword>
<name>D5_FOWPN</name>
<evidence type="ECO:0000250" key="1"/>
<evidence type="ECO:0000255" key="2"/>
<evidence type="ECO:0000255" key="3">
    <source>
        <dbReference type="PROSITE-ProRule" id="PRU00551"/>
    </source>
</evidence>
<evidence type="ECO:0000305" key="4"/>
<gene>
    <name type="ordered locus">FPV058</name>
    <name type="ORF">FPD5</name>
</gene>
<proteinExistence type="inferred from homology"/>
<dbReference type="EC" id="3.6.4.-"/>
<dbReference type="EMBL" id="X17202">
    <property type="protein sequence ID" value="CAA35068.1"/>
    <property type="molecule type" value="Genomic_DNA"/>
</dbReference>
<dbReference type="EMBL" id="AF198100">
    <property type="protein sequence ID" value="AAF44402.1"/>
    <property type="molecule type" value="Genomic_DNA"/>
</dbReference>
<dbReference type="PIR" id="E35216">
    <property type="entry name" value="E35216"/>
</dbReference>
<dbReference type="RefSeq" id="NP_039021.1">
    <property type="nucleotide sequence ID" value="NC_002188.1"/>
</dbReference>
<dbReference type="SMR" id="P21969"/>
<dbReference type="GeneID" id="1486606"/>
<dbReference type="KEGG" id="vg:1486606"/>
<dbReference type="Proteomes" id="UP000008597">
    <property type="component" value="Segment"/>
</dbReference>
<dbReference type="GO" id="GO:0005524">
    <property type="term" value="F:ATP binding"/>
    <property type="evidence" value="ECO:0007669"/>
    <property type="project" value="UniProtKB-KW"/>
</dbReference>
<dbReference type="GO" id="GO:0003677">
    <property type="term" value="F:DNA binding"/>
    <property type="evidence" value="ECO:0007669"/>
    <property type="project" value="UniProtKB-KW"/>
</dbReference>
<dbReference type="GO" id="GO:0004386">
    <property type="term" value="F:helicase activity"/>
    <property type="evidence" value="ECO:0007669"/>
    <property type="project" value="UniProtKB-KW"/>
</dbReference>
<dbReference type="GO" id="GO:0016787">
    <property type="term" value="F:hydrolase activity"/>
    <property type="evidence" value="ECO:0007669"/>
    <property type="project" value="UniProtKB-KW"/>
</dbReference>
<dbReference type="GO" id="GO:0006260">
    <property type="term" value="P:DNA replication"/>
    <property type="evidence" value="ECO:0007669"/>
    <property type="project" value="UniProtKB-KW"/>
</dbReference>
<dbReference type="Gene3D" id="3.40.50.300">
    <property type="entry name" value="P-loop containing nucleotide triphosphate hydrolases"/>
    <property type="match status" value="1"/>
</dbReference>
<dbReference type="InterPro" id="IPR004968">
    <property type="entry name" value="DNA_primase/NTPase_C"/>
</dbReference>
<dbReference type="InterPro" id="IPR014015">
    <property type="entry name" value="Helicase_SF3_DNA-vir"/>
</dbReference>
<dbReference type="InterPro" id="IPR027417">
    <property type="entry name" value="P-loop_NTPase"/>
</dbReference>
<dbReference type="InterPro" id="IPR014818">
    <property type="entry name" value="Phage/plasmid_primase_P4_C"/>
</dbReference>
<dbReference type="InterPro" id="IPR051620">
    <property type="entry name" value="Viral_Helicase-Primase_Cplx"/>
</dbReference>
<dbReference type="PANTHER" id="PTHR35372">
    <property type="entry name" value="ATP BINDING PROTEIN-RELATED"/>
    <property type="match status" value="1"/>
</dbReference>
<dbReference type="PANTHER" id="PTHR35372:SF2">
    <property type="entry name" value="SF3 HELICASE DOMAIN-CONTAINING PROTEIN"/>
    <property type="match status" value="1"/>
</dbReference>
<dbReference type="Pfam" id="PF08706">
    <property type="entry name" value="D5_N"/>
    <property type="match status" value="1"/>
</dbReference>
<dbReference type="Pfam" id="PF03288">
    <property type="entry name" value="Pox_D5"/>
    <property type="match status" value="1"/>
</dbReference>
<dbReference type="SUPFAM" id="SSF52540">
    <property type="entry name" value="P-loop containing nucleoside triphosphate hydrolases"/>
    <property type="match status" value="1"/>
</dbReference>
<dbReference type="PROSITE" id="PS51206">
    <property type="entry name" value="SF3_HELICASE_1"/>
    <property type="match status" value="1"/>
</dbReference>
<comment type="function">
    <text evidence="1">Primase which may have roles in initiation of DNA replication or lagging-strand synthesis.</text>
</comment>
<comment type="subunit">
    <text evidence="1">Interacts with A20.</text>
</comment>
<comment type="similarity">
    <text evidence="4">Belongs to the poxviridae D5 family.</text>
</comment>
<protein>
    <recommendedName>
        <fullName>Primase D5</fullName>
        <ecNumber>3.6.4.-</ecNumber>
    </recommendedName>
</protein>
<feature type="chain" id="PRO_0000099442" description="Primase D5">
    <location>
        <begin position="1"/>
        <end position="791"/>
    </location>
</feature>
<feature type="domain" description="SF3 helicase" evidence="3">
    <location>
        <begin position="479"/>
        <end position="641"/>
    </location>
</feature>
<feature type="region of interest" description="Primase" evidence="1">
    <location>
        <begin position="346"/>
        <end position="471"/>
    </location>
</feature>
<feature type="active site" evidence="2">
    <location>
        <position position="174"/>
    </location>
</feature>
<feature type="binding site" evidence="3">
    <location>
        <begin position="505"/>
        <end position="512"/>
    </location>
    <ligand>
        <name>ATP</name>
        <dbReference type="ChEBI" id="CHEBI:30616"/>
    </ligand>
</feature>
<feature type="sequence conflict" description="In Ref. 1; CAA35068." evidence="4" ref="1">
    <original>C</original>
    <variation>Y</variation>
    <location>
        <position position="565"/>
    </location>
</feature>
<reference key="1">
    <citation type="journal article" date="1990" name="J. Gen. Virol.">
        <title>Nucleotide sequence analysis of a 10.5 kbp HindIII fragment of fowlpox virus: relatedness to the central portion of the vaccinia virus HindIII D region.</title>
        <authorList>
            <person name="Tartaglia J."/>
            <person name="Winslow J."/>
            <person name="Goebel S.J."/>
            <person name="Johnson G.P."/>
            <person name="Taylor J."/>
            <person name="Paoletti E."/>
        </authorList>
    </citation>
    <scope>NUCLEOTIDE SEQUENCE [GENOMIC DNA]</scope>
    <source>
        <strain>FP-1</strain>
    </source>
</reference>
<reference key="2">
    <citation type="journal article" date="2000" name="J. Virol.">
        <title>The genome of fowlpox virus.</title>
        <authorList>
            <person name="Afonso C.L."/>
            <person name="Tulman E.R."/>
            <person name="Lu Z."/>
            <person name="Zsak L."/>
            <person name="Kutish G.F."/>
            <person name="Rock D.L."/>
        </authorList>
    </citation>
    <scope>NUCLEOTIDE SEQUENCE [LARGE SCALE GENOMIC DNA]</scope>
</reference>
<organismHost>
    <name type="scientific">Vertebrata</name>
    <dbReference type="NCBI Taxonomy" id="7742"/>
</organismHost>